<evidence type="ECO:0000255" key="1">
    <source>
        <dbReference type="HAMAP-Rule" id="MF_02105"/>
    </source>
</evidence>
<protein>
    <recommendedName>
        <fullName evidence="1">Lactate utilization protein A 2</fullName>
    </recommendedName>
</protein>
<proteinExistence type="inferred from homology"/>
<dbReference type="EMBL" id="CP000903">
    <property type="protein sequence ID" value="ABY42465.1"/>
    <property type="molecule type" value="Genomic_DNA"/>
</dbReference>
<dbReference type="RefSeq" id="WP_002011587.1">
    <property type="nucleotide sequence ID" value="NC_010184.1"/>
</dbReference>
<dbReference type="SMR" id="A9VKN0"/>
<dbReference type="KEGG" id="bwe:BcerKBAB4_1218"/>
<dbReference type="eggNOG" id="COG0247">
    <property type="taxonomic scope" value="Bacteria"/>
</dbReference>
<dbReference type="HOGENOM" id="CLU_023081_1_0_9"/>
<dbReference type="Proteomes" id="UP000002154">
    <property type="component" value="Chromosome"/>
</dbReference>
<dbReference type="GO" id="GO:0005829">
    <property type="term" value="C:cytosol"/>
    <property type="evidence" value="ECO:0007669"/>
    <property type="project" value="TreeGrafter"/>
</dbReference>
<dbReference type="GO" id="GO:0016491">
    <property type="term" value="F:oxidoreductase activity"/>
    <property type="evidence" value="ECO:0007669"/>
    <property type="project" value="UniProtKB-ARBA"/>
</dbReference>
<dbReference type="GO" id="GO:0006089">
    <property type="term" value="P:lactate metabolic process"/>
    <property type="evidence" value="ECO:0007669"/>
    <property type="project" value="UniProtKB-UniRule"/>
</dbReference>
<dbReference type="HAMAP" id="MF_02105">
    <property type="entry name" value="LutA"/>
    <property type="match status" value="1"/>
</dbReference>
<dbReference type="InterPro" id="IPR004017">
    <property type="entry name" value="Cys_rich_dom"/>
</dbReference>
<dbReference type="InterPro" id="IPR022822">
    <property type="entry name" value="LutA"/>
</dbReference>
<dbReference type="PANTHER" id="PTHR30296:SF0">
    <property type="entry name" value="LACTATE UTILIZATION PROTEIN A"/>
    <property type="match status" value="1"/>
</dbReference>
<dbReference type="PANTHER" id="PTHR30296">
    <property type="entry name" value="UNCHARACTERIZED PROTEIN YKGE"/>
    <property type="match status" value="1"/>
</dbReference>
<dbReference type="Pfam" id="PF02754">
    <property type="entry name" value="CCG"/>
    <property type="match status" value="2"/>
</dbReference>
<reference key="1">
    <citation type="journal article" date="2008" name="Chem. Biol. Interact.">
        <title>Extending the Bacillus cereus group genomics to putative food-borne pathogens of different toxicity.</title>
        <authorList>
            <person name="Lapidus A."/>
            <person name="Goltsman E."/>
            <person name="Auger S."/>
            <person name="Galleron N."/>
            <person name="Segurens B."/>
            <person name="Dossat C."/>
            <person name="Land M.L."/>
            <person name="Broussolle V."/>
            <person name="Brillard J."/>
            <person name="Guinebretiere M.-H."/>
            <person name="Sanchis V."/>
            <person name="Nguen-the C."/>
            <person name="Lereclus D."/>
            <person name="Richardson P."/>
            <person name="Wincker P."/>
            <person name="Weissenbach J."/>
            <person name="Ehrlich S.D."/>
            <person name="Sorokin A."/>
        </authorList>
    </citation>
    <scope>NUCLEOTIDE SEQUENCE [LARGE SCALE GENOMIC DNA]</scope>
    <source>
        <strain>KBAB4</strain>
    </source>
</reference>
<feature type="chain" id="PRO_0000384046" description="Lactate utilization protein A 2">
    <location>
        <begin position="1"/>
        <end position="239"/>
    </location>
</feature>
<sequence length="239" mass="26198">MKVTLFVTCLVDMFETNVGKATVEVLERLGCEIEFPEAQVCCGQPAYNSGHVEAAKEAMKHMIETFEDAEYIVTPSGSCATMFHEYPHVFKDDPKWAKRAQKVADKTYEFTQFIVDVLKVTDVGASLPGIATIHKSCHMTRLLGVKEAPGILLSSVKGLIVRELPNVQNCCGFGGTFSVKMTPISEQMVDEKVDSVMETGADYLIGADCGCLLNIGGRIERLGKEVKVMHIAEVLNSRS</sequence>
<accession>A9VKN0</accession>
<name>LUTA2_BACMK</name>
<organism>
    <name type="scientific">Bacillus mycoides (strain KBAB4)</name>
    <name type="common">Bacillus weihenstephanensis</name>
    <dbReference type="NCBI Taxonomy" id="315730"/>
    <lineage>
        <taxon>Bacteria</taxon>
        <taxon>Bacillati</taxon>
        <taxon>Bacillota</taxon>
        <taxon>Bacilli</taxon>
        <taxon>Bacillales</taxon>
        <taxon>Bacillaceae</taxon>
        <taxon>Bacillus</taxon>
        <taxon>Bacillus cereus group</taxon>
    </lineage>
</organism>
<comment type="function">
    <text evidence="1">Is involved in L-lactate degradation and allows cells to grow with lactate as the sole carbon source.</text>
</comment>
<comment type="similarity">
    <text evidence="1">Belongs to the LutA/YkgE family.</text>
</comment>
<gene>
    <name evidence="1" type="primary">lutA2</name>
    <name type="ordered locus">BcerKBAB4_1218</name>
</gene>